<dbReference type="EMBL" id="M96629">
    <property type="protein sequence ID" value="AAA30891.1"/>
    <property type="molecule type" value="mRNA"/>
</dbReference>
<dbReference type="PIR" id="A44170">
    <property type="entry name" value="A44170"/>
</dbReference>
<dbReference type="RefSeq" id="NP_001003315.1">
    <property type="nucleotide sequence ID" value="NM_001003315.1"/>
</dbReference>
<dbReference type="PDB" id="2WWB">
    <property type="method" value="EM"/>
    <property type="resolution" value="6.48 A"/>
    <property type="chains" value="A=1-476"/>
</dbReference>
<dbReference type="PDB" id="3JC2">
    <property type="method" value="EM"/>
    <property type="resolution" value="3.60 A"/>
    <property type="chains" value="1=1-476"/>
</dbReference>
<dbReference type="PDB" id="4CG5">
    <property type="method" value="EM"/>
    <property type="resolution" value="7.40 A"/>
    <property type="chains" value="A=1-476"/>
</dbReference>
<dbReference type="PDB" id="4CG6">
    <property type="method" value="EM"/>
    <property type="resolution" value="7.80 A"/>
    <property type="chains" value="A=1-476"/>
</dbReference>
<dbReference type="PDB" id="4CG7">
    <property type="method" value="EM"/>
    <property type="resolution" value="6.90 A"/>
    <property type="chains" value="A=1-476"/>
</dbReference>
<dbReference type="PDB" id="5A6U">
    <property type="method" value="EM"/>
    <property type="resolution" value="9.00 A"/>
    <property type="chains" value="A=26-476"/>
</dbReference>
<dbReference type="PDB" id="6FTG">
    <property type="method" value="EM"/>
    <property type="resolution" value="9.10 A"/>
    <property type="chains" value="x=5-465"/>
</dbReference>
<dbReference type="PDB" id="6FTI">
    <property type="method" value="EM"/>
    <property type="resolution" value="4.20 A"/>
    <property type="chains" value="x=5-465"/>
</dbReference>
<dbReference type="PDB" id="6FTJ">
    <property type="method" value="EM"/>
    <property type="resolution" value="4.70 A"/>
    <property type="chains" value="x=5-465"/>
</dbReference>
<dbReference type="PDB" id="6R7Q">
    <property type="method" value="EM"/>
    <property type="resolution" value="3.90 A"/>
    <property type="chains" value="XX=5-465"/>
</dbReference>
<dbReference type="PDB" id="6Z3T">
    <property type="method" value="EM"/>
    <property type="resolution" value="2.69 A"/>
    <property type="chains" value="A=1-476"/>
</dbReference>
<dbReference type="PDB" id="7TM3">
    <property type="method" value="EM"/>
    <property type="resolution" value="3.25 A"/>
    <property type="chains" value="1=1-476"/>
</dbReference>
<dbReference type="PDB" id="7TUT">
    <property type="method" value="EM"/>
    <property type="resolution" value="3.88 A"/>
    <property type="chains" value="1=1-476"/>
</dbReference>
<dbReference type="PDB" id="8BTK">
    <property type="method" value="EM"/>
    <property type="resolution" value="3.50 A"/>
    <property type="chains" value="SX=1-476"/>
</dbReference>
<dbReference type="PDB" id="8OJ0">
    <property type="method" value="EM"/>
    <property type="resolution" value="3.30 A"/>
    <property type="chains" value="1=1-476"/>
</dbReference>
<dbReference type="PDB" id="8OJ8">
    <property type="method" value="EM"/>
    <property type="resolution" value="3.30 A"/>
    <property type="chains" value="1=1-476"/>
</dbReference>
<dbReference type="PDB" id="8RJB">
    <property type="method" value="EM"/>
    <property type="resolution" value="2.69 A"/>
    <property type="chains" value="1=1-476"/>
</dbReference>
<dbReference type="PDB" id="8RJC">
    <property type="method" value="EM"/>
    <property type="resolution" value="2.90 A"/>
    <property type="chains" value="1=1-476"/>
</dbReference>
<dbReference type="PDB" id="8RJD">
    <property type="method" value="EM"/>
    <property type="resolution" value="2.79 A"/>
    <property type="chains" value="1=1-476"/>
</dbReference>
<dbReference type="PDBsum" id="2WWB"/>
<dbReference type="PDBsum" id="3JC2"/>
<dbReference type="PDBsum" id="4CG5"/>
<dbReference type="PDBsum" id="4CG6"/>
<dbReference type="PDBsum" id="4CG7"/>
<dbReference type="PDBsum" id="5A6U"/>
<dbReference type="PDBsum" id="6FTG"/>
<dbReference type="PDBsum" id="6FTI"/>
<dbReference type="PDBsum" id="6FTJ"/>
<dbReference type="PDBsum" id="6R7Q"/>
<dbReference type="PDBsum" id="6Z3T"/>
<dbReference type="PDBsum" id="7TM3"/>
<dbReference type="PDBsum" id="7TUT"/>
<dbReference type="PDBsum" id="8BTK"/>
<dbReference type="PDBsum" id="8OJ0"/>
<dbReference type="PDBsum" id="8OJ8"/>
<dbReference type="PDBsum" id="8RJB"/>
<dbReference type="PDBsum" id="8RJC"/>
<dbReference type="PDBsum" id="8RJD"/>
<dbReference type="EMDB" id="EMD-11064"/>
<dbReference type="EMDB" id="EMD-16232"/>
<dbReference type="EMDB" id="EMD-16902"/>
<dbReference type="EMDB" id="EMD-16908"/>
<dbReference type="EMDB" id="EMD-19195"/>
<dbReference type="EMDB" id="EMD-19197"/>
<dbReference type="EMDB" id="EMD-19198"/>
<dbReference type="EMDB" id="EMD-2510"/>
<dbReference type="EMDB" id="EMD-25994"/>
<dbReference type="EMDB" id="EMD-26133"/>
<dbReference type="EMDB" id="EMD-4315"/>
<dbReference type="EMDB" id="EMD-4316"/>
<dbReference type="EMDB" id="EMD-4317"/>
<dbReference type="EMDB" id="EMD-4745"/>
<dbReference type="SMR" id="P38377"/>
<dbReference type="CORUM" id="P38377"/>
<dbReference type="FunCoup" id="P38377">
    <property type="interactions" value="1976"/>
</dbReference>
<dbReference type="IntAct" id="P38377">
    <property type="interactions" value="1"/>
</dbReference>
<dbReference type="MINT" id="P38377"/>
<dbReference type="STRING" id="9615.ENSCAFP00000061198"/>
<dbReference type="PaxDb" id="9612-ENSCAFP00000006087"/>
<dbReference type="GeneID" id="404006"/>
<dbReference type="KEGG" id="cfa:404006"/>
<dbReference type="CTD" id="29927"/>
<dbReference type="eggNOG" id="KOG1373">
    <property type="taxonomic scope" value="Eukaryota"/>
</dbReference>
<dbReference type="InParanoid" id="P38377"/>
<dbReference type="OrthoDB" id="420669at2759"/>
<dbReference type="EvolutionaryTrace" id="P38377"/>
<dbReference type="Proteomes" id="UP000002254">
    <property type="component" value="Unplaced"/>
</dbReference>
<dbReference type="Proteomes" id="UP000694429">
    <property type="component" value="Unplaced"/>
</dbReference>
<dbReference type="Proteomes" id="UP000694542">
    <property type="component" value="Unplaced"/>
</dbReference>
<dbReference type="Proteomes" id="UP000805418">
    <property type="component" value="Unplaced"/>
</dbReference>
<dbReference type="GO" id="GO:0005789">
    <property type="term" value="C:endoplasmic reticulum membrane"/>
    <property type="evidence" value="ECO:0000314"/>
    <property type="project" value="UniProtKB"/>
</dbReference>
<dbReference type="GO" id="GO:0005784">
    <property type="term" value="C:Sec61 translocon complex"/>
    <property type="evidence" value="ECO:0000318"/>
    <property type="project" value="GO_Central"/>
</dbReference>
<dbReference type="GO" id="GO:0008320">
    <property type="term" value="F:protein transmembrane transporter activity"/>
    <property type="evidence" value="ECO:0000318"/>
    <property type="project" value="GO_Central"/>
</dbReference>
<dbReference type="GO" id="GO:0043022">
    <property type="term" value="F:ribosome binding"/>
    <property type="evidence" value="ECO:0000250"/>
    <property type="project" value="UniProtKB"/>
</dbReference>
<dbReference type="GO" id="GO:0005048">
    <property type="term" value="F:signal sequence binding"/>
    <property type="evidence" value="ECO:0000318"/>
    <property type="project" value="GO_Central"/>
</dbReference>
<dbReference type="GO" id="GO:0006613">
    <property type="term" value="P:cotranslational protein targeting to membrane"/>
    <property type="evidence" value="ECO:0000250"/>
    <property type="project" value="UniProtKB"/>
</dbReference>
<dbReference type="GO" id="GO:0031204">
    <property type="term" value="P:post-translational protein targeting to membrane, translocation"/>
    <property type="evidence" value="ECO:0000318"/>
    <property type="project" value="GO_Central"/>
</dbReference>
<dbReference type="GO" id="GO:0039019">
    <property type="term" value="P:pronephric nephron development"/>
    <property type="evidence" value="ECO:0000250"/>
    <property type="project" value="UniProtKB"/>
</dbReference>
<dbReference type="GO" id="GO:0045048">
    <property type="term" value="P:protein insertion into ER membrane"/>
    <property type="evidence" value="ECO:0000250"/>
    <property type="project" value="UniProtKB"/>
</dbReference>
<dbReference type="GO" id="GO:0045047">
    <property type="term" value="P:protein targeting to ER"/>
    <property type="evidence" value="ECO:0000314"/>
    <property type="project" value="UniProtKB"/>
</dbReference>
<dbReference type="GO" id="GO:0006616">
    <property type="term" value="P:SRP-dependent cotranslational protein targeting to membrane, translocation"/>
    <property type="evidence" value="ECO:0000318"/>
    <property type="project" value="GO_Central"/>
</dbReference>
<dbReference type="FunFam" id="1.10.3370.10:FF:000002">
    <property type="entry name" value="Transport Sec61 subunit alpha isoform 2"/>
    <property type="match status" value="1"/>
</dbReference>
<dbReference type="Gene3D" id="1.10.3370.10">
    <property type="entry name" value="SecY subunit domain"/>
    <property type="match status" value="1"/>
</dbReference>
<dbReference type="InterPro" id="IPR002208">
    <property type="entry name" value="SecY/SEC61-alpha"/>
</dbReference>
<dbReference type="InterPro" id="IPR030659">
    <property type="entry name" value="SecY_CS"/>
</dbReference>
<dbReference type="InterPro" id="IPR023201">
    <property type="entry name" value="SecY_dom_sf"/>
</dbReference>
<dbReference type="InterPro" id="IPR019561">
    <property type="entry name" value="Translocon_Sec61/SecY_plug_dom"/>
</dbReference>
<dbReference type="NCBIfam" id="TIGR00967">
    <property type="entry name" value="3a0501s007"/>
    <property type="match status" value="1"/>
</dbReference>
<dbReference type="NCBIfam" id="NF006341">
    <property type="entry name" value="PRK08568.1-5"/>
    <property type="match status" value="1"/>
</dbReference>
<dbReference type="PANTHER" id="PTHR10906">
    <property type="entry name" value="SECY/SEC61-ALPHA FAMILY MEMBER"/>
    <property type="match status" value="1"/>
</dbReference>
<dbReference type="Pfam" id="PF10559">
    <property type="entry name" value="Plug_translocon"/>
    <property type="match status" value="1"/>
</dbReference>
<dbReference type="Pfam" id="PF00344">
    <property type="entry name" value="SecY"/>
    <property type="match status" value="1"/>
</dbReference>
<dbReference type="PIRSF" id="PIRSF004557">
    <property type="entry name" value="SecY"/>
    <property type="match status" value="1"/>
</dbReference>
<dbReference type="SUPFAM" id="SSF103491">
    <property type="entry name" value="Preprotein translocase SecY subunit"/>
    <property type="match status" value="1"/>
</dbReference>
<dbReference type="PROSITE" id="PS00755">
    <property type="entry name" value="SECY_1"/>
    <property type="match status" value="1"/>
</dbReference>
<dbReference type="PROSITE" id="PS00756">
    <property type="entry name" value="SECY_2"/>
    <property type="match status" value="1"/>
</dbReference>
<organism>
    <name type="scientific">Canis lupus familiaris</name>
    <name type="common">Dog</name>
    <name type="synonym">Canis familiaris</name>
    <dbReference type="NCBI Taxonomy" id="9615"/>
    <lineage>
        <taxon>Eukaryota</taxon>
        <taxon>Metazoa</taxon>
        <taxon>Chordata</taxon>
        <taxon>Craniata</taxon>
        <taxon>Vertebrata</taxon>
        <taxon>Euteleostomi</taxon>
        <taxon>Mammalia</taxon>
        <taxon>Eutheria</taxon>
        <taxon>Laurasiatheria</taxon>
        <taxon>Carnivora</taxon>
        <taxon>Caniformia</taxon>
        <taxon>Canidae</taxon>
        <taxon>Canis</taxon>
    </lineage>
</organism>
<sequence>MAIKFLEVIKPFCVILPEIQKPERKIQFKEKVLWTAITLFIFLVCCQIPLFGIMSSDSADPFYWMRVILASNRGTLMELGISPIVTSGLIMQLLAGAKIIEVGDTPKDRALFNGAQKLFGMIITIGQSIVYVMTGMYGDPSEMGAGICLLITIQLFVAGLIVLLLDELLQKGYGLGSGISLFIATNICETIVWKAFSPTTVNTGRGMEFEGAIIALFHLLATRTDKVRALREAFYRQNLPNLMNLIATIFVFAVVIYFQGFRVDLPIKSARYRGQYNTYPIKLFYTSNIPIILQSALVSNLYVISQMLSARFSGNLLVSLLGTWSDTSSGGPARAYPVGGLCHYLSPPESFGSVLEDPVHAVVYIVFMLGSCAFFSKTWIEVSGSSAKDVAKQLKEQQMVMRGHRETSMVHELNRYIPTAAAFGGLCIGALSVLADFLGAIGSGTGILLAVTIIYQYFEIFVKEQSEVGSMGALLF</sequence>
<evidence type="ECO:0000250" key="1">
    <source>
        <dbReference type="UniProtKB" id="P61619"/>
    </source>
</evidence>
<evidence type="ECO:0000250" key="2">
    <source>
        <dbReference type="UniProtKB" id="P61620"/>
    </source>
</evidence>
<evidence type="ECO:0000269" key="3">
    <source>
    </source>
</evidence>
<evidence type="ECO:0000269" key="4">
    <source>
    </source>
</evidence>
<evidence type="ECO:0000269" key="5">
    <source>
    </source>
</evidence>
<evidence type="ECO:0000305" key="6"/>
<evidence type="ECO:0007744" key="7">
    <source>
        <dbReference type="PDB" id="7TM3"/>
    </source>
</evidence>
<evidence type="ECO:0007744" key="8">
    <source>
        <dbReference type="PDB" id="7TUT"/>
    </source>
</evidence>
<evidence type="ECO:0007829" key="9">
    <source>
        <dbReference type="PDB" id="6Z3T"/>
    </source>
</evidence>
<name>S61A1_CANLF</name>
<protein>
    <recommendedName>
        <fullName>Protein transport protein Sec61 subunit alpha isoform 1</fullName>
        <shortName>Sec61 alpha-1</shortName>
    </recommendedName>
</protein>
<gene>
    <name type="primary">SEC61A1</name>
</gene>
<keyword id="KW-0002">3D-structure</keyword>
<keyword id="KW-0217">Developmental protein</keyword>
<keyword id="KW-0903">Direct protein sequencing</keyword>
<keyword id="KW-0256">Endoplasmic reticulum</keyword>
<keyword id="KW-0472">Membrane</keyword>
<keyword id="KW-0653">Protein transport</keyword>
<keyword id="KW-1185">Reference proteome</keyword>
<keyword id="KW-0811">Translocation</keyword>
<keyword id="KW-0812">Transmembrane</keyword>
<keyword id="KW-1133">Transmembrane helix</keyword>
<keyword id="KW-0813">Transport</keyword>
<accession>P38377</accession>
<comment type="function">
    <text evidence="1 2 3 4 5">Component of SEC61 channel-forming translocon complex that mediates transport of signal peptide-containing precursor polypeptides across the endoplasmic reticulum (ER) (PubMed:10799540, PubMed:1423609). Forms a ribosome receptor and a gated pore in the ER membrane, both functions required for cotranslational translocation of nascent polypeptides (By similarity). May cooperate with auxiliary protein SEC62, SEC63 and HSPA5/BiP to enable post-translational transport of small presecretory proteins (By similarity). The SEC61 channel is also involved in ER membrane insertion of transmembrane proteins: it mediates membrane insertion of the first few transmembrane segments of proteins, while insertion of subsequent transmembrane regions of multi-pass membrane proteins is mediated by the multi-pass translocon (MPT) complex (PubMed:36261528). The SEC61 channel cooperates with the translocating protein TRAM1 to import nascent proteins into the ER (By similarity). Controls the passive efflux of calcium ions from the ER lumen to the cytosol through SEC61 channel, contributing to the maintenance of cellular calcium homeostasis (By similarity). Plays a critical role in nephrogenesis, specifically at pronephros stage (By similarity).</text>
</comment>
<comment type="subunit">
    <text evidence="3 4 5">The SEC61 channel-forming translocon complex consists of channel-forming core components SEC61A1, SEC61B and SEC61G and different auxiliary components such as SEC62 and SEC63 (PubMed:10799540, PubMed:1423609, PubMed:36261528). The SEC61 channel associates with the multi-pass translocon (MPT) complex (PubMed:36261528).</text>
</comment>
<comment type="interaction">
    <interactant intactId="EBI-8517797">
        <id>P38377</id>
    </interactant>
    <interactant intactId="EBI-397530">
        <id>P62161</id>
        <label>Calm3</label>
    </interactant>
    <organismsDiffer>true</organismsDiffer>
    <experiments>4</experiments>
</comment>
<comment type="subcellular location">
    <subcellularLocation>
        <location evidence="5">Endoplasmic reticulum membrane</location>
        <topology evidence="5">Multi-pass membrane protein</topology>
    </subcellularLocation>
    <text evidence="1">Localizes exclusively in granular structures in the endoplasmic reticulum (ER).</text>
</comment>
<comment type="similarity">
    <text evidence="6">Belongs to the SecY/SEC61-alpha family.</text>
</comment>
<proteinExistence type="evidence at protein level"/>
<feature type="initiator methionine" description="Removed" evidence="4">
    <location>
        <position position="1"/>
    </location>
</feature>
<feature type="chain" id="PRO_0000131790" description="Protein transport protein Sec61 subunit alpha isoform 1">
    <location>
        <begin position="2"/>
        <end position="476"/>
    </location>
</feature>
<feature type="topological domain" description="Cytoplasmic" evidence="5 7 8">
    <location>
        <begin position="2"/>
        <end position="28"/>
    </location>
</feature>
<feature type="transmembrane region" description="Helical" evidence="5 7 8">
    <location>
        <begin position="29"/>
        <end position="46"/>
    </location>
</feature>
<feature type="topological domain" description="Lumenal" evidence="5 7 8">
    <location>
        <begin position="47"/>
        <end position="80"/>
    </location>
</feature>
<feature type="transmembrane region" description="Helical" evidence="5 7 8">
    <location>
        <begin position="81"/>
        <end position="97"/>
    </location>
</feature>
<feature type="topological domain" description="Cytoplasmic" evidence="5 7 8">
    <location>
        <begin position="98"/>
        <end position="109"/>
    </location>
</feature>
<feature type="transmembrane region" description="Helical" evidence="5 7 8">
    <location>
        <begin position="110"/>
        <end position="131"/>
    </location>
</feature>
<feature type="topological domain" description="Lumenal" evidence="5 7 8">
    <location>
        <begin position="132"/>
        <end position="148"/>
    </location>
</feature>
<feature type="transmembrane region" description="Helical" evidence="5 7 8">
    <location>
        <begin position="149"/>
        <end position="167"/>
    </location>
</feature>
<feature type="topological domain" description="Cytoplasmic" evidence="5 7 8">
    <location>
        <begin position="168"/>
        <end position="177"/>
    </location>
</feature>
<feature type="transmembrane region" description="Helical" evidence="5 7 8">
    <location>
        <begin position="178"/>
        <end position="196"/>
    </location>
</feature>
<feature type="topological domain" description="Lumenal" evidence="5 7 8">
    <location>
        <begin position="197"/>
        <end position="241"/>
    </location>
</feature>
<feature type="transmembrane region" description="Helical" evidence="5 7 8">
    <location>
        <begin position="242"/>
        <end position="259"/>
    </location>
</feature>
<feature type="topological domain" description="Cytoplasmic" evidence="5 7 8">
    <location>
        <begin position="260"/>
        <end position="285"/>
    </location>
</feature>
<feature type="transmembrane region" description="Helical" evidence="5 7 8">
    <location>
        <begin position="286"/>
        <end position="306"/>
    </location>
</feature>
<feature type="topological domain" description="Lumenal" evidence="5 7 8">
    <location>
        <begin position="307"/>
        <end position="356"/>
    </location>
</feature>
<feature type="transmembrane region" description="Helical" evidence="5 7 8">
    <location>
        <begin position="357"/>
        <end position="379"/>
    </location>
</feature>
<feature type="topological domain" description="Cytoplasmic" evidence="5 7 8">
    <location>
        <begin position="380"/>
        <end position="420"/>
    </location>
</feature>
<feature type="transmembrane region" description="Helical" evidence="5 7 8">
    <location>
        <begin position="421"/>
        <end position="437"/>
    </location>
</feature>
<feature type="topological domain" description="Lumenal" evidence="5 7 8">
    <location>
        <begin position="438"/>
        <end position="443"/>
    </location>
</feature>
<feature type="transmembrane region" description="Helical" evidence="5 7 8">
    <location>
        <begin position="444"/>
        <end position="458"/>
    </location>
</feature>
<feature type="topological domain" description="Cytoplasmic" evidence="5 7 8">
    <location>
        <begin position="459"/>
        <end position="476"/>
    </location>
</feature>
<feature type="helix" evidence="9">
    <location>
        <begin position="30"/>
        <end position="43"/>
    </location>
</feature>
<feature type="strand" evidence="9">
    <location>
        <begin position="58"/>
        <end position="60"/>
    </location>
</feature>
<feature type="turn" evidence="9">
    <location>
        <begin position="61"/>
        <end position="69"/>
    </location>
</feature>
<feature type="strand" evidence="9">
    <location>
        <begin position="73"/>
        <end position="77"/>
    </location>
</feature>
<feature type="helix" evidence="9">
    <location>
        <begin position="82"/>
        <end position="96"/>
    </location>
</feature>
<feature type="helix" evidence="9">
    <location>
        <begin position="110"/>
        <end position="132"/>
    </location>
</feature>
<feature type="helix" evidence="9">
    <location>
        <begin position="151"/>
        <end position="167"/>
    </location>
</feature>
<feature type="helix" evidence="9">
    <location>
        <begin position="179"/>
        <end position="193"/>
    </location>
</feature>
<feature type="strand" evidence="9">
    <location>
        <begin position="204"/>
        <end position="208"/>
    </location>
</feature>
<feature type="helix" evidence="9">
    <location>
        <begin position="213"/>
        <end position="219"/>
    </location>
</feature>
<feature type="turn" evidence="9">
    <location>
        <begin position="220"/>
        <end position="222"/>
    </location>
</feature>
<feature type="helix" evidence="9">
    <location>
        <begin position="226"/>
        <end position="234"/>
    </location>
</feature>
<feature type="strand" evidence="9">
    <location>
        <begin position="242"/>
        <end position="244"/>
    </location>
</feature>
<feature type="helix" evidence="9">
    <location>
        <begin position="247"/>
        <end position="259"/>
    </location>
</feature>
<feature type="strand" evidence="9">
    <location>
        <begin position="262"/>
        <end position="265"/>
    </location>
</feature>
<feature type="strand" evidence="9">
    <location>
        <begin position="279"/>
        <end position="282"/>
    </location>
</feature>
<feature type="helix" evidence="9">
    <location>
        <begin position="289"/>
        <end position="312"/>
    </location>
</feature>
<feature type="turn" evidence="9">
    <location>
        <begin position="338"/>
        <end position="340"/>
    </location>
</feature>
<feature type="helix" evidence="9">
    <location>
        <begin position="342"/>
        <end position="344"/>
    </location>
</feature>
<feature type="helix" evidence="9">
    <location>
        <begin position="358"/>
        <end position="380"/>
    </location>
</feature>
<feature type="turn" evidence="9">
    <location>
        <begin position="381"/>
        <end position="384"/>
    </location>
</feature>
<feature type="helix" evidence="9">
    <location>
        <begin position="387"/>
        <end position="396"/>
    </location>
</feature>
<feature type="strand" evidence="9">
    <location>
        <begin position="402"/>
        <end position="404"/>
    </location>
</feature>
<feature type="turn" evidence="9">
    <location>
        <begin position="408"/>
        <end position="410"/>
    </location>
</feature>
<feature type="helix" evidence="9">
    <location>
        <begin position="411"/>
        <end position="414"/>
    </location>
</feature>
<feature type="turn" evidence="9">
    <location>
        <begin position="415"/>
        <end position="418"/>
    </location>
</feature>
<feature type="helix" evidence="9">
    <location>
        <begin position="419"/>
        <end position="433"/>
    </location>
</feature>
<feature type="turn" evidence="9">
    <location>
        <begin position="434"/>
        <end position="439"/>
    </location>
</feature>
<feature type="strand" evidence="9">
    <location>
        <begin position="441"/>
        <end position="445"/>
    </location>
</feature>
<feature type="helix" evidence="9">
    <location>
        <begin position="446"/>
        <end position="463"/>
    </location>
</feature>
<reference key="1">
    <citation type="journal article" date="1992" name="Cell">
        <title>A mammalian homolog of SEC61p and SECYp is associated with ribosomes and nascent polypeptides during translocation.</title>
        <authorList>
            <person name="Goerlich D."/>
            <person name="Prehn S."/>
            <person name="Hartmann E."/>
            <person name="Kalies K.-U."/>
            <person name="Rapoport T.A."/>
        </authorList>
    </citation>
    <scope>NUCLEOTIDE SEQUENCE [MRNA]</scope>
    <scope>PROTEIN SEQUENCE OF 2-20</scope>
    <scope>SUBUNIT</scope>
</reference>
<reference key="2">
    <citation type="journal article" date="2000" name="J. Biol. Chem.">
        <title>Mammalian Sec61 is associated with Sec62 and Sec63.</title>
        <authorList>
            <person name="Meyer H.-A."/>
            <person name="Grau H."/>
            <person name="Kraft R."/>
            <person name="Kostka S."/>
            <person name="Prehn S."/>
            <person name="Kalies K.-U."/>
            <person name="Hartmann E."/>
        </authorList>
    </citation>
    <scope>SUBUNIT</scope>
</reference>
<reference key="3">
    <citation type="journal article" date="2022" name="Nature">
        <title>Mechanism of an intramembrane chaperone for multipass membrane proteins.</title>
        <authorList>
            <person name="Smalinskaite L."/>
            <person name="Kim M.K."/>
            <person name="Lewis A.J.O."/>
            <person name="Keenan R.J."/>
            <person name="Hegde R.S."/>
        </authorList>
    </citation>
    <scope>STRUCTURE BY ELECTRON MICROSCOPY (3.88 ANGSTROMS) IN COMPLEX WITH THE MULTI-PASS TRANSLOCON COMPLEX</scope>
    <scope>FUNCTION</scope>
    <scope>SUBCELLULAR LOCATION</scope>
    <scope>INTERACTION WITH THE MULTI-PASS TRANSLOCON COMPLEX</scope>
</reference>